<protein>
    <recommendedName>
        <fullName>Methylcytosine dioxygenase TET1</fullName>
        <ecNumber evidence="7 10">1.14.11.80</ecNumber>
    </recommendedName>
    <alternativeName>
        <fullName>CXXC-type zinc finger protein 6</fullName>
    </alternativeName>
    <alternativeName>
        <fullName>Leukemia-associated protein with a CXXC domain</fullName>
    </alternativeName>
    <alternativeName>
        <fullName>Ten-eleven translocation 1 gene protein</fullName>
    </alternativeName>
</protein>
<accession>Q8NFU7</accession>
<accession>A0A023HHK9</accession>
<accession>A0A023HHL0</accession>
<accession>Q5VUP7</accession>
<accession>Q7Z6B6</accession>
<accession>Q8TCR1</accession>
<accession>Q9C0I7</accession>
<organism>
    <name type="scientific">Homo sapiens</name>
    <name type="common">Human</name>
    <dbReference type="NCBI Taxonomy" id="9606"/>
    <lineage>
        <taxon>Eukaryota</taxon>
        <taxon>Metazoa</taxon>
        <taxon>Chordata</taxon>
        <taxon>Craniata</taxon>
        <taxon>Vertebrata</taxon>
        <taxon>Euteleostomi</taxon>
        <taxon>Mammalia</taxon>
        <taxon>Eutheria</taxon>
        <taxon>Euarchontoglires</taxon>
        <taxon>Primates</taxon>
        <taxon>Haplorrhini</taxon>
        <taxon>Catarrhini</taxon>
        <taxon>Hominidae</taxon>
        <taxon>Homo</taxon>
    </lineage>
</organism>
<proteinExistence type="evidence at protein level"/>
<dbReference type="EC" id="1.14.11.80" evidence="7 10"/>
<dbReference type="EMBL" id="AF430147">
    <property type="protein sequence ID" value="AAM88301.1"/>
    <property type="molecule type" value="mRNA"/>
</dbReference>
<dbReference type="EMBL" id="JX311858">
    <property type="protein sequence ID" value="AGK83641.1"/>
    <property type="molecule type" value="mRNA"/>
</dbReference>
<dbReference type="EMBL" id="JX311859">
    <property type="protein sequence ID" value="AGK83642.1"/>
    <property type="molecule type" value="mRNA"/>
</dbReference>
<dbReference type="EMBL" id="AL513534">
    <property type="status" value="NOT_ANNOTATED_CDS"/>
    <property type="molecule type" value="Genomic_DNA"/>
</dbReference>
<dbReference type="EMBL" id="AL713888">
    <property type="status" value="NOT_ANNOTATED_CDS"/>
    <property type="molecule type" value="Genomic_DNA"/>
</dbReference>
<dbReference type="EMBL" id="AB051463">
    <property type="protein sequence ID" value="BAB21767.1"/>
    <property type="molecule type" value="mRNA"/>
</dbReference>
<dbReference type="EMBL" id="AL713658">
    <property type="protein sequence ID" value="CAD28467.3"/>
    <property type="status" value="ALT_SEQ"/>
    <property type="molecule type" value="mRNA"/>
</dbReference>
<dbReference type="EMBL" id="BC053905">
    <property type="protein sequence ID" value="AAH53905.1"/>
    <property type="molecule type" value="mRNA"/>
</dbReference>
<dbReference type="CCDS" id="CCDS7281.1">
    <molecule id="Q8NFU7-1"/>
</dbReference>
<dbReference type="RefSeq" id="NP_001393300.1">
    <molecule id="Q8NFU7-2"/>
    <property type="nucleotide sequence ID" value="NM_001406371.1"/>
</dbReference>
<dbReference type="RefSeq" id="NP_001393301.1">
    <molecule id="Q8NFU7-2"/>
    <property type="nucleotide sequence ID" value="NM_001406372.1"/>
</dbReference>
<dbReference type="RefSeq" id="NP_001393303.1">
    <molecule id="Q8NFU7-3"/>
    <property type="nucleotide sequence ID" value="NM_001406374.1"/>
</dbReference>
<dbReference type="RefSeq" id="NP_085128.2">
    <molecule id="Q8NFU7-1"/>
    <property type="nucleotide sequence ID" value="NM_030625.3"/>
</dbReference>
<dbReference type="PDB" id="6ASD">
    <property type="method" value="X-ray"/>
    <property type="resolution" value="1.85 A"/>
    <property type="chains" value="C=587-632"/>
</dbReference>
<dbReference type="PDBsum" id="6ASD"/>
<dbReference type="SMR" id="Q8NFU7"/>
<dbReference type="BioGRID" id="123225">
    <property type="interactions" value="36"/>
</dbReference>
<dbReference type="ComplexPortal" id="CPX-3323">
    <property type="entry name" value="SIN3A histone deacetylase complex, ES cell-specific variant"/>
</dbReference>
<dbReference type="FunCoup" id="Q8NFU7">
    <property type="interactions" value="1169"/>
</dbReference>
<dbReference type="IntAct" id="Q8NFU7">
    <property type="interactions" value="10"/>
</dbReference>
<dbReference type="MINT" id="Q8NFU7"/>
<dbReference type="STRING" id="9606.ENSP00000362748"/>
<dbReference type="BindingDB" id="Q8NFU7"/>
<dbReference type="ChEMBL" id="CHEMBL4523402"/>
<dbReference type="GlyCosmos" id="Q8NFU7">
    <property type="glycosylation" value="3 sites, 1 glycan"/>
</dbReference>
<dbReference type="GlyGen" id="Q8NFU7">
    <property type="glycosylation" value="5 sites, 1 O-linked glycan (3 sites)"/>
</dbReference>
<dbReference type="iPTMnet" id="Q8NFU7"/>
<dbReference type="PhosphoSitePlus" id="Q8NFU7"/>
<dbReference type="BioMuta" id="TET1"/>
<dbReference type="DMDM" id="115502139"/>
<dbReference type="jPOST" id="Q8NFU7"/>
<dbReference type="MassIVE" id="Q8NFU7"/>
<dbReference type="PaxDb" id="9606-ENSP00000362748"/>
<dbReference type="PeptideAtlas" id="Q8NFU7"/>
<dbReference type="ProteomicsDB" id="73363"/>
<dbReference type="Pumba" id="Q8NFU7"/>
<dbReference type="Antibodypedia" id="14634">
    <property type="antibodies" value="358 antibodies from 30 providers"/>
</dbReference>
<dbReference type="DNASU" id="80312"/>
<dbReference type="Ensembl" id="ENST00000373644.5">
    <molecule id="Q8NFU7-1"/>
    <property type="protein sequence ID" value="ENSP00000362748.4"/>
    <property type="gene ID" value="ENSG00000138336.9"/>
</dbReference>
<dbReference type="GeneID" id="80312"/>
<dbReference type="KEGG" id="hsa:80312"/>
<dbReference type="MANE-Select" id="ENST00000373644.5">
    <property type="protein sequence ID" value="ENSP00000362748.4"/>
    <property type="RefSeq nucleotide sequence ID" value="NM_030625.3"/>
    <property type="RefSeq protein sequence ID" value="NP_085128.2"/>
</dbReference>
<dbReference type="UCSC" id="uc001jok.5">
    <molecule id="Q8NFU7-1"/>
    <property type="organism name" value="human"/>
</dbReference>
<dbReference type="AGR" id="HGNC:29484"/>
<dbReference type="CTD" id="80312"/>
<dbReference type="DisGeNET" id="80312"/>
<dbReference type="GeneCards" id="TET1"/>
<dbReference type="HGNC" id="HGNC:29484">
    <property type="gene designation" value="TET1"/>
</dbReference>
<dbReference type="HPA" id="ENSG00000138336">
    <property type="expression patterns" value="Low tissue specificity"/>
</dbReference>
<dbReference type="MIM" id="607790">
    <property type="type" value="gene"/>
</dbReference>
<dbReference type="neXtProt" id="NX_Q8NFU7"/>
<dbReference type="OpenTargets" id="ENSG00000138336"/>
<dbReference type="PharmGKB" id="PA162405605"/>
<dbReference type="VEuPathDB" id="HostDB:ENSG00000138336"/>
<dbReference type="eggNOG" id="ENOG502QURD">
    <property type="taxonomic scope" value="Eukaryota"/>
</dbReference>
<dbReference type="GeneTree" id="ENSGT00940000158935"/>
<dbReference type="HOGENOM" id="CLU_001618_2_0_1"/>
<dbReference type="InParanoid" id="Q8NFU7"/>
<dbReference type="OMA" id="VKEQLMH"/>
<dbReference type="OrthoDB" id="8854879at2759"/>
<dbReference type="PAN-GO" id="Q8NFU7">
    <property type="GO annotations" value="5 GO annotations based on evolutionary models"/>
</dbReference>
<dbReference type="PhylomeDB" id="Q8NFU7"/>
<dbReference type="TreeFam" id="TF324004"/>
<dbReference type="BioCyc" id="MetaCyc:ENSG00000138336-MONOMER"/>
<dbReference type="PathwayCommons" id="Q8NFU7"/>
<dbReference type="Reactome" id="R-HSA-5221030">
    <property type="pathway name" value="TET1,2,3 and TDG demethylate DNA"/>
</dbReference>
<dbReference type="SignaLink" id="Q8NFU7"/>
<dbReference type="SIGNOR" id="Q8NFU7"/>
<dbReference type="BioGRID-ORCS" id="80312">
    <property type="hits" value="11 hits in 1184 CRISPR screens"/>
</dbReference>
<dbReference type="ChiTaRS" id="TET1">
    <property type="organism name" value="human"/>
</dbReference>
<dbReference type="GeneWiki" id="Tet_methylcytosine_dioxygenase_1"/>
<dbReference type="GenomeRNAi" id="80312"/>
<dbReference type="Pharos" id="Q8NFU7">
    <property type="development level" value="Tbio"/>
</dbReference>
<dbReference type="PRO" id="PR:Q8NFU7"/>
<dbReference type="Proteomes" id="UP000005640">
    <property type="component" value="Chromosome 10"/>
</dbReference>
<dbReference type="RNAct" id="Q8NFU7">
    <property type="molecule type" value="protein"/>
</dbReference>
<dbReference type="Bgee" id="ENSG00000138336">
    <property type="expression patterns" value="Expressed in primordial germ cell in gonad and 119 other cell types or tissues"/>
</dbReference>
<dbReference type="GO" id="GO:0005634">
    <property type="term" value="C:nucleus"/>
    <property type="evidence" value="ECO:0000318"/>
    <property type="project" value="GO_Central"/>
</dbReference>
<dbReference type="GO" id="GO:0070822">
    <property type="term" value="C:Sin3-type complex"/>
    <property type="evidence" value="ECO:0000303"/>
    <property type="project" value="ComplexPortal"/>
</dbReference>
<dbReference type="GO" id="GO:0070579">
    <property type="term" value="F:5-methylcytosine dioxygenase activity"/>
    <property type="evidence" value="ECO:0000314"/>
    <property type="project" value="UniProtKB"/>
</dbReference>
<dbReference type="GO" id="GO:0003677">
    <property type="term" value="F:DNA binding"/>
    <property type="evidence" value="ECO:0000314"/>
    <property type="project" value="UniProtKB"/>
</dbReference>
<dbReference type="GO" id="GO:0005506">
    <property type="term" value="F:iron ion binding"/>
    <property type="evidence" value="ECO:0000314"/>
    <property type="project" value="UniProtKB"/>
</dbReference>
<dbReference type="GO" id="GO:0008327">
    <property type="term" value="F:methyl-CpG binding"/>
    <property type="evidence" value="ECO:0000314"/>
    <property type="project" value="UniProtKB"/>
</dbReference>
<dbReference type="GO" id="GO:0000978">
    <property type="term" value="F:RNA polymerase II cis-regulatory region sequence-specific DNA binding"/>
    <property type="evidence" value="ECO:0000314"/>
    <property type="project" value="ARUK-UCL"/>
</dbReference>
<dbReference type="GO" id="GO:0008270">
    <property type="term" value="F:zinc ion binding"/>
    <property type="evidence" value="ECO:0000314"/>
    <property type="project" value="UniProtKB"/>
</dbReference>
<dbReference type="GO" id="GO:0034614">
    <property type="term" value="P:cellular response to reactive oxygen species"/>
    <property type="evidence" value="ECO:0000314"/>
    <property type="project" value="ARUK-UCL"/>
</dbReference>
<dbReference type="GO" id="GO:0006338">
    <property type="term" value="P:chromatin remodeling"/>
    <property type="evidence" value="ECO:0000315"/>
    <property type="project" value="UniProtKB"/>
</dbReference>
<dbReference type="GO" id="GO:0141167">
    <property type="term" value="P:chromosomal 5-methylcytosine DNA demethylation, oxidation pathway"/>
    <property type="evidence" value="ECO:0007669"/>
    <property type="project" value="InterPro"/>
</dbReference>
<dbReference type="GO" id="GO:0001826">
    <property type="term" value="P:inner cell mass cell differentiation"/>
    <property type="evidence" value="ECO:0000250"/>
    <property type="project" value="UniProtKB"/>
</dbReference>
<dbReference type="GO" id="GO:0030336">
    <property type="term" value="P:negative regulation of cell migration"/>
    <property type="evidence" value="ECO:0000303"/>
    <property type="project" value="ComplexPortal"/>
</dbReference>
<dbReference type="GO" id="GO:1902455">
    <property type="term" value="P:negative regulation of stem cell population maintenance"/>
    <property type="evidence" value="ECO:0000303"/>
    <property type="project" value="ComplexPortal"/>
</dbReference>
<dbReference type="GO" id="GO:0000122">
    <property type="term" value="P:negative regulation of transcription by RNA polymerase II"/>
    <property type="evidence" value="ECO:0000303"/>
    <property type="project" value="ComplexPortal"/>
</dbReference>
<dbReference type="GO" id="GO:0030512">
    <property type="term" value="P:negative regulation of transforming growth factor beta receptor signaling pathway"/>
    <property type="evidence" value="ECO:0000303"/>
    <property type="project" value="ComplexPortal"/>
</dbReference>
<dbReference type="GO" id="GO:0044029">
    <property type="term" value="P:positive regulation of gene expression via chromosomal CpG island demethylation"/>
    <property type="evidence" value="ECO:0000314"/>
    <property type="project" value="ARUK-UCL"/>
</dbReference>
<dbReference type="GO" id="GO:1902459">
    <property type="term" value="P:positive regulation of stem cell population maintenance"/>
    <property type="evidence" value="ECO:0000303"/>
    <property type="project" value="ComplexPortal"/>
</dbReference>
<dbReference type="GO" id="GO:0045944">
    <property type="term" value="P:positive regulation of transcription by RNA polymerase II"/>
    <property type="evidence" value="ECO:0000314"/>
    <property type="project" value="ARUK-UCL"/>
</dbReference>
<dbReference type="GO" id="GO:0006493">
    <property type="term" value="P:protein O-linked glycosylation"/>
    <property type="evidence" value="ECO:0000250"/>
    <property type="project" value="UniProtKB"/>
</dbReference>
<dbReference type="GO" id="GO:0019827">
    <property type="term" value="P:stem cell population maintenance"/>
    <property type="evidence" value="ECO:0000250"/>
    <property type="project" value="UniProtKB"/>
</dbReference>
<dbReference type="InterPro" id="IPR024779">
    <property type="entry name" value="2OGFeDO_JBP1/TET_oxygenase_dom"/>
</dbReference>
<dbReference type="InterPro" id="IPR040175">
    <property type="entry name" value="TET1/2/3"/>
</dbReference>
<dbReference type="InterPro" id="IPR046942">
    <property type="entry name" value="TET_oxygenase"/>
</dbReference>
<dbReference type="InterPro" id="IPR002857">
    <property type="entry name" value="Znf_CXXC"/>
</dbReference>
<dbReference type="PANTHER" id="PTHR23358">
    <property type="entry name" value="METHYLCYTOSINE DIOXYGENASE TET"/>
    <property type="match status" value="1"/>
</dbReference>
<dbReference type="PANTHER" id="PTHR23358:SF2">
    <property type="entry name" value="METHYLCYTOSINE DIOXYGENASE TET1"/>
    <property type="match status" value="1"/>
</dbReference>
<dbReference type="Pfam" id="PF12851">
    <property type="entry name" value="Tet_JBP"/>
    <property type="match status" value="1"/>
</dbReference>
<dbReference type="Pfam" id="PF02008">
    <property type="entry name" value="zf-CXXC"/>
    <property type="match status" value="1"/>
</dbReference>
<dbReference type="SMART" id="SM01333">
    <property type="entry name" value="Tet_JBP"/>
    <property type="match status" value="1"/>
</dbReference>
<dbReference type="PROSITE" id="PS51058">
    <property type="entry name" value="ZF_CXXC"/>
    <property type="match status" value="1"/>
</dbReference>
<feature type="chain" id="PRO_0000251949" description="Methylcytosine dioxygenase TET1">
    <location>
        <begin position="1"/>
        <end position="2136"/>
    </location>
</feature>
<feature type="zinc finger region" description="CXXC-type" evidence="3 17">
    <location>
        <begin position="584"/>
        <end position="625"/>
    </location>
</feature>
<feature type="region of interest" description="Disordered" evidence="4">
    <location>
        <begin position="1"/>
        <end position="47"/>
    </location>
</feature>
<feature type="region of interest" description="Sufficient for binding to genomic CpG islands">
    <location>
        <begin position="528"/>
        <end position="674"/>
    </location>
</feature>
<feature type="region of interest" description="Disordered" evidence="4">
    <location>
        <begin position="712"/>
        <end position="746"/>
    </location>
</feature>
<feature type="region of interest" description="Disordered" evidence="4">
    <location>
        <begin position="849"/>
        <end position="876"/>
    </location>
</feature>
<feature type="region of interest" description="Disordered" evidence="4">
    <location>
        <begin position="899"/>
        <end position="923"/>
    </location>
</feature>
<feature type="region of interest" description="Disordered" evidence="4">
    <location>
        <begin position="1119"/>
        <end position="1169"/>
    </location>
</feature>
<feature type="region of interest" description="Interaction with DNA" evidence="2">
    <location>
        <begin position="1580"/>
        <end position="1593"/>
    </location>
</feature>
<feature type="region of interest" description="Disordered" evidence="4">
    <location>
        <begin position="1774"/>
        <end position="1897"/>
    </location>
</feature>
<feature type="region of interest" description="Disordered" evidence="4">
    <location>
        <begin position="1919"/>
        <end position="1984"/>
    </location>
</feature>
<feature type="region of interest" description="Disordered" evidence="4">
    <location>
        <begin position="2074"/>
        <end position="2100"/>
    </location>
</feature>
<feature type="compositionally biased region" description="Basic residues" evidence="4">
    <location>
        <begin position="1"/>
        <end position="12"/>
    </location>
</feature>
<feature type="compositionally biased region" description="Basic residues" evidence="4">
    <location>
        <begin position="20"/>
        <end position="31"/>
    </location>
</feature>
<feature type="compositionally biased region" description="Polar residues" evidence="4">
    <location>
        <begin position="32"/>
        <end position="43"/>
    </location>
</feature>
<feature type="compositionally biased region" description="Basic and acidic residues" evidence="4">
    <location>
        <begin position="712"/>
        <end position="724"/>
    </location>
</feature>
<feature type="compositionally biased region" description="Basic and acidic residues" evidence="4">
    <location>
        <begin position="732"/>
        <end position="743"/>
    </location>
</feature>
<feature type="compositionally biased region" description="Basic and acidic residues" evidence="4">
    <location>
        <begin position="849"/>
        <end position="869"/>
    </location>
</feature>
<feature type="compositionally biased region" description="Low complexity" evidence="4">
    <location>
        <begin position="901"/>
        <end position="911"/>
    </location>
</feature>
<feature type="compositionally biased region" description="Polar residues" evidence="4">
    <location>
        <begin position="1119"/>
        <end position="1139"/>
    </location>
</feature>
<feature type="compositionally biased region" description="Basic residues" evidence="4">
    <location>
        <begin position="1146"/>
        <end position="1163"/>
    </location>
</feature>
<feature type="compositionally biased region" description="Low complexity" evidence="4">
    <location>
        <begin position="1786"/>
        <end position="1800"/>
    </location>
</feature>
<feature type="compositionally biased region" description="Polar residues" evidence="4">
    <location>
        <begin position="1824"/>
        <end position="1833"/>
    </location>
</feature>
<feature type="compositionally biased region" description="Polar residues" evidence="4">
    <location>
        <begin position="1937"/>
        <end position="1953"/>
    </location>
</feature>
<feature type="compositionally biased region" description="Acidic residues" evidence="4">
    <location>
        <begin position="1957"/>
        <end position="1976"/>
    </location>
</feature>
<feature type="compositionally biased region" description="Basic and acidic residues" evidence="4">
    <location>
        <begin position="2074"/>
        <end position="2087"/>
    </location>
</feature>
<feature type="binding site" evidence="3 17 32">
    <location>
        <position position="591"/>
    </location>
    <ligand>
        <name>Zn(2+)</name>
        <dbReference type="ChEBI" id="CHEBI:29105"/>
        <label>1</label>
    </ligand>
</feature>
<feature type="binding site" evidence="3 17 32">
    <location>
        <position position="594"/>
    </location>
    <ligand>
        <name>Zn(2+)</name>
        <dbReference type="ChEBI" id="CHEBI:29105"/>
        <label>1</label>
    </ligand>
</feature>
<feature type="binding site" evidence="3 17 32">
    <location>
        <position position="597"/>
    </location>
    <ligand>
        <name>Zn(2+)</name>
        <dbReference type="ChEBI" id="CHEBI:29105"/>
        <label>1</label>
    </ligand>
</feature>
<feature type="binding site" evidence="3 17 32">
    <location>
        <position position="603"/>
    </location>
    <ligand>
        <name>Zn(2+)</name>
        <dbReference type="ChEBI" id="CHEBI:29105"/>
        <label>2</label>
    </ligand>
</feature>
<feature type="binding site" evidence="3 17 32">
    <location>
        <position position="606"/>
    </location>
    <ligand>
        <name>Zn(2+)</name>
        <dbReference type="ChEBI" id="CHEBI:29105"/>
        <label>2</label>
    </ligand>
</feature>
<feature type="binding site" evidence="3 17 32">
    <location>
        <position position="609"/>
    </location>
    <ligand>
        <name>Zn(2+)</name>
        <dbReference type="ChEBI" id="CHEBI:29105"/>
        <label>2</label>
    </ligand>
</feature>
<feature type="binding site" evidence="3 17 32">
    <location>
        <position position="619"/>
    </location>
    <ligand>
        <name>Zn(2+)</name>
        <dbReference type="ChEBI" id="CHEBI:29105"/>
        <label>2</label>
    </ligand>
</feature>
<feature type="binding site" evidence="3 17 32">
    <location>
        <position position="624"/>
    </location>
    <ligand>
        <name>Zn(2+)</name>
        <dbReference type="ChEBI" id="CHEBI:29105"/>
        <label>1</label>
    </ligand>
</feature>
<feature type="binding site" evidence="2">
    <location>
        <position position="1422"/>
    </location>
    <ligand>
        <name>Zn(2+)</name>
        <dbReference type="ChEBI" id="CHEBI:29105"/>
        <label>3</label>
    </ligand>
</feature>
<feature type="binding site" evidence="2">
    <location>
        <position position="1424"/>
    </location>
    <ligand>
        <name>Zn(2+)</name>
        <dbReference type="ChEBI" id="CHEBI:29105"/>
        <label>3</label>
    </ligand>
</feature>
<feature type="binding site" evidence="2">
    <location>
        <position position="1482"/>
    </location>
    <ligand>
        <name>Zn(2+)</name>
        <dbReference type="ChEBI" id="CHEBI:29105"/>
        <label>4</label>
    </ligand>
</feature>
<feature type="binding site" evidence="2">
    <location>
        <position position="1508"/>
    </location>
    <ligand>
        <name>Zn(2+)</name>
        <dbReference type="ChEBI" id="CHEBI:29105"/>
        <label>1</label>
    </ligand>
</feature>
<feature type="binding site" evidence="2">
    <location>
        <position position="1510"/>
    </location>
    <ligand>
        <name>Zn(2+)</name>
        <dbReference type="ChEBI" id="CHEBI:29105"/>
        <label>3</label>
    </ligand>
</feature>
<feature type="binding site" evidence="2">
    <location>
        <position position="1551"/>
    </location>
    <ligand>
        <name>2-oxoglutarate</name>
        <dbReference type="ChEBI" id="CHEBI:16810"/>
    </ligand>
</feature>
<feature type="binding site" evidence="2">
    <location>
        <position position="1561"/>
    </location>
    <ligand>
        <name>Zn(2+)</name>
        <dbReference type="ChEBI" id="CHEBI:29105"/>
        <label>4</label>
    </ligand>
</feature>
<feature type="binding site" evidence="2">
    <location>
        <position position="1563"/>
    </location>
    <ligand>
        <name>Zn(2+)</name>
        <dbReference type="ChEBI" id="CHEBI:29105"/>
        <label>4</label>
    </ligand>
</feature>
<feature type="binding site" evidence="2">
    <location>
        <position position="1579"/>
    </location>
    <ligand>
        <name>Zn(2+)</name>
        <dbReference type="ChEBI" id="CHEBI:29105"/>
        <label>3</label>
    </ligand>
</feature>
<feature type="binding site" evidence="2">
    <location>
        <position position="1588"/>
    </location>
    <ligand>
        <name>Zn(2+)</name>
        <dbReference type="ChEBI" id="CHEBI:29105"/>
        <label>3</label>
    </ligand>
</feature>
<feature type="binding site" evidence="2">
    <location>
        <position position="1648"/>
    </location>
    <ligand>
        <name>Zn(2+)</name>
        <dbReference type="ChEBI" id="CHEBI:29105"/>
        <label>3</label>
    </ligand>
</feature>
<feature type="binding site" evidence="2">
    <location>
        <position position="1664"/>
    </location>
    <ligand>
        <name>2-oxoglutarate</name>
        <dbReference type="ChEBI" id="CHEBI:16810"/>
    </ligand>
</feature>
<feature type="binding site" evidence="2">
    <location>
        <position position="1670"/>
    </location>
    <ligand>
        <name>Zn(2+)</name>
        <dbReference type="ChEBI" id="CHEBI:29105"/>
        <label>2</label>
    </ligand>
</feature>
<feature type="binding site" evidence="10">
    <location>
        <position position="1672"/>
    </location>
    <ligand>
        <name>Fe cation</name>
        <dbReference type="ChEBI" id="CHEBI:24875"/>
        <note>catalytic</note>
    </ligand>
</feature>
<feature type="binding site" evidence="10">
    <location>
        <position position="1674"/>
    </location>
    <ligand>
        <name>Fe cation</name>
        <dbReference type="ChEBI" id="CHEBI:24875"/>
        <note>catalytic</note>
    </ligand>
</feature>
<feature type="binding site" evidence="2">
    <location>
        <position position="1677"/>
    </location>
    <ligand>
        <name>substrate</name>
    </ligand>
</feature>
<feature type="binding site" evidence="2">
    <location>
        <position position="1706"/>
    </location>
    <ligand>
        <name>2-oxoglutarate</name>
        <dbReference type="ChEBI" id="CHEBI:16810"/>
    </ligand>
</feature>
<feature type="binding site" evidence="2">
    <location>
        <position position="2028"/>
    </location>
    <ligand>
        <name>Fe cation</name>
        <dbReference type="ChEBI" id="CHEBI:24875"/>
        <note>catalytic</note>
    </ligand>
</feature>
<feature type="binding site" evidence="2">
    <location>
        <begin position="2043"/>
        <end position="2045"/>
    </location>
    <ligand>
        <name>2-oxoglutarate</name>
        <dbReference type="ChEBI" id="CHEBI:16810"/>
    </ligand>
</feature>
<feature type="binding site" evidence="2">
    <location>
        <begin position="2049"/>
        <end position="2051"/>
    </location>
    <ligand>
        <name>substrate</name>
    </ligand>
</feature>
<feature type="binding site" evidence="2">
    <location>
        <position position="2059"/>
    </location>
    <ligand>
        <name>Zn(2+)</name>
        <dbReference type="ChEBI" id="CHEBI:29105"/>
        <label>3</label>
    </ligand>
</feature>
<feature type="site" description="Breakpoint for translocation to form KMT2A/MLL1-TET1 oncogene" evidence="5">
    <location>
        <begin position="1608"/>
        <end position="1609"/>
    </location>
</feature>
<feature type="modified residue" description="Phosphoserine" evidence="33">
    <location>
        <position position="871"/>
    </location>
</feature>
<feature type="cross-link" description="Glycyl lysine isopeptide (Lys-Gly) (interchain with G-Cter in ubiquitin)" evidence="21">
    <location>
        <position position="1589"/>
    </location>
</feature>
<feature type="splice variant" id="VSP_061826" description="In isoform 2.">
    <location>
        <begin position="1"/>
        <end position="671"/>
    </location>
</feature>
<feature type="splice variant" id="VSP_061827" description="In isoform 3.">
    <location>
        <begin position="657"/>
        <end position="1487"/>
    </location>
</feature>
<feature type="splice variant" id="VSP_061828" description="In isoform 4.">
    <original>ADFDNKPVNGPKSESMDYSRCGHGEEQKLELNPHTVEN</original>
    <variation>IELYKKTKAHIIHTLGQDQVLLLSGKSWRIGMVKKETQ</variation>
    <location>
        <begin position="657"/>
        <end position="694"/>
    </location>
</feature>
<feature type="splice variant" id="VSP_061829" description="In isoform 4.">
    <location>
        <begin position="695"/>
        <end position="2136"/>
    </location>
</feature>
<feature type="sequence variant" id="VAR_027734" description="In dbSNP:rs10823229.">
    <original>D</original>
    <variation>G</variation>
    <location>
        <position position="162"/>
    </location>
</feature>
<feature type="sequence variant" id="VAR_027735" description="In dbSNP:rs12773594." evidence="22">
    <original>S</original>
    <variation>T</variation>
    <location>
        <position position="193"/>
    </location>
</feature>
<feature type="sequence variant" id="VAR_027736" description="In dbSNP:rs12221107." evidence="22">
    <original>A</original>
    <variation>V</variation>
    <location>
        <position position="256"/>
    </location>
</feature>
<feature type="sequence variant" id="VAR_027737" description="In dbSNP:rs16925541.">
    <original>N</original>
    <variation>S</variation>
    <location>
        <position position="1018"/>
    </location>
</feature>
<feature type="sequence variant" id="VAR_027738" description="In dbSNP:rs3998860." evidence="5">
    <original>I</original>
    <variation>M</variation>
    <location>
        <position position="1123"/>
    </location>
</feature>
<feature type="sequence variant" id="VAR_080763" description="Found in a consanguineous family with intellectual disability; uncertain significance." evidence="15">
    <original>K</original>
    <variation>N</variation>
    <location>
        <position position="2056"/>
    </location>
</feature>
<feature type="mutagenesis site" description="Loss of catalytic activity and loss of the ability to induce DNA demethylation; when associated with A-1674. When transfected in knockout cells, fails to restore pancreatic beta-cell specification, as shown by impaired NKX6.1, PAX6, PDX1 and INS expression; when associated with A-1674." evidence="7 10 20">
    <original>H</original>
    <variation>Y</variation>
    <location>
        <position position="1672"/>
    </location>
</feature>
<feature type="mutagenesis site" description="Loss of catalytic activity and loss of the ability to induce DNA demethylation; when associated with Y-1672. When transfected in knockout cells, fails to restore pancreatic beta-cell specification, as shown by impaired NKX6.1, PAX6, PDX1 and INS expression; when associated with Y-1672." evidence="7 10 20">
    <original>D</original>
    <variation>A</variation>
    <location>
        <position position="1674"/>
    </location>
</feature>
<feature type="sequence conflict" description="In Ref. 5; CAD28467." evidence="26" ref="5">
    <original>F</original>
    <variation>L</variation>
    <location>
        <position position="2001"/>
    </location>
</feature>
<feature type="helix" evidence="34">
    <location>
        <begin position="595"/>
        <end position="598"/>
    </location>
</feature>
<feature type="strand" evidence="34">
    <location>
        <begin position="604"/>
        <end position="606"/>
    </location>
</feature>
<feature type="helix" evidence="34">
    <location>
        <begin position="607"/>
        <end position="610"/>
    </location>
</feature>
<feature type="turn" evidence="34">
    <location>
        <begin position="611"/>
        <end position="614"/>
    </location>
</feature>
<feature type="turn" evidence="34">
    <location>
        <begin position="620"/>
        <end position="622"/>
    </location>
</feature>
<feature type="helix" evidence="34">
    <location>
        <begin position="625"/>
        <end position="628"/>
    </location>
</feature>
<evidence type="ECO:0000250" key="1">
    <source>
        <dbReference type="UniProtKB" id="Q3URK3"/>
    </source>
</evidence>
<evidence type="ECO:0000250" key="2">
    <source>
        <dbReference type="UniProtKB" id="Q6N021"/>
    </source>
</evidence>
<evidence type="ECO:0000255" key="3">
    <source>
        <dbReference type="PROSITE-ProRule" id="PRU00509"/>
    </source>
</evidence>
<evidence type="ECO:0000256" key="4">
    <source>
        <dbReference type="SAM" id="MobiDB-lite"/>
    </source>
</evidence>
<evidence type="ECO:0000269" key="5">
    <source>
    </source>
</evidence>
<evidence type="ECO:0000269" key="6">
    <source>
    </source>
</evidence>
<evidence type="ECO:0000269" key="7">
    <source>
    </source>
</evidence>
<evidence type="ECO:0000269" key="8">
    <source>
    </source>
</evidence>
<evidence type="ECO:0000269" key="9">
    <source>
    </source>
</evidence>
<evidence type="ECO:0000269" key="10">
    <source>
    </source>
</evidence>
<evidence type="ECO:0000269" key="11">
    <source>
    </source>
</evidence>
<evidence type="ECO:0000269" key="12">
    <source>
    </source>
</evidence>
<evidence type="ECO:0000269" key="13">
    <source>
    </source>
</evidence>
<evidence type="ECO:0000269" key="14">
    <source>
    </source>
</evidence>
<evidence type="ECO:0000269" key="15">
    <source>
    </source>
</evidence>
<evidence type="ECO:0000269" key="16">
    <source>
    </source>
</evidence>
<evidence type="ECO:0000269" key="17">
    <source>
    </source>
</evidence>
<evidence type="ECO:0000269" key="18">
    <source>
    </source>
</evidence>
<evidence type="ECO:0000269" key="19">
    <source>
    </source>
</evidence>
<evidence type="ECO:0000269" key="20">
    <source>
    </source>
</evidence>
<evidence type="ECO:0000269" key="21">
    <source>
    </source>
</evidence>
<evidence type="ECO:0000269" key="22">
    <source ref="2"/>
</evidence>
<evidence type="ECO:0000303" key="23">
    <source>
    </source>
</evidence>
<evidence type="ECO:0000303" key="24">
    <source>
    </source>
</evidence>
<evidence type="ECO:0000303" key="25">
    <source>
    </source>
</evidence>
<evidence type="ECO:0000305" key="26"/>
<evidence type="ECO:0000305" key="27">
    <source>
    </source>
</evidence>
<evidence type="ECO:0000305" key="28">
    <source>
    </source>
</evidence>
<evidence type="ECO:0000305" key="29">
    <source>
    </source>
</evidence>
<evidence type="ECO:0000305" key="30">
    <source ref="2"/>
</evidence>
<evidence type="ECO:0000312" key="31">
    <source>
        <dbReference type="HGNC" id="HGNC:29484"/>
    </source>
</evidence>
<evidence type="ECO:0007744" key="32">
    <source>
        <dbReference type="PDB" id="6ASD"/>
    </source>
</evidence>
<evidence type="ECO:0007744" key="33">
    <source>
    </source>
</evidence>
<evidence type="ECO:0007829" key="34">
    <source>
        <dbReference type="PDB" id="6ASD"/>
    </source>
</evidence>
<reference key="1">
    <citation type="journal article" date="2002" name="Cancer Res.">
        <title>LCX, leukemia-associated protein with a CXXC domain, is fused to MLL in acute myeloid leukemia with trilineage dysplasia having t(10;11)(q22;q23).</title>
        <authorList>
            <person name="Ono R."/>
            <person name="Taki T."/>
            <person name="Taketani T."/>
            <person name="Taniwaki M."/>
            <person name="Kobayashi H."/>
            <person name="Hayashi Y."/>
        </authorList>
    </citation>
    <scope>NUCLEOTIDE SEQUENCE [MRNA] (ISOFORM 1)</scope>
    <scope>VARIANT MET-1123</scope>
    <scope>FUNCTION</scope>
    <scope>TISSUE SPECIFICITY</scope>
    <scope>CHROMOSOMAL TRANSLOCATION WITH KMT2A/MLL1</scope>
    <source>
        <tissue>Leukemia</tissue>
    </source>
</reference>
<reference key="2">
    <citation type="submission" date="2012-07" db="EMBL/GenBank/DDBJ databases">
        <title>Identification and characterization of TET1 isoforms in hematopoiesis.</title>
        <authorList>
            <person name="Loesing P."/>
            <person name="Mohr F."/>
            <person name="Bamezai S."/>
            <person name="Buske C."/>
            <person name="Rawat V.P.S."/>
        </authorList>
    </citation>
    <scope>NUCLEOTIDE SEQUENCE [MRNA] (ISOFORMS 3 AND 4)</scope>
    <scope>VARIANTS THR-193 AND VAL-256</scope>
    <source>
        <tissue>Embryonic kidney</tissue>
    </source>
</reference>
<reference key="3">
    <citation type="journal article" date="2004" name="Nature">
        <title>The DNA sequence and comparative analysis of human chromosome 10.</title>
        <authorList>
            <person name="Deloukas P."/>
            <person name="Earthrowl M.E."/>
            <person name="Grafham D.V."/>
            <person name="Rubenfield M."/>
            <person name="French L."/>
            <person name="Steward C.A."/>
            <person name="Sims S.K."/>
            <person name="Jones M.C."/>
            <person name="Searle S."/>
            <person name="Scott C."/>
            <person name="Howe K."/>
            <person name="Hunt S.E."/>
            <person name="Andrews T.D."/>
            <person name="Gilbert J.G.R."/>
            <person name="Swarbreck D."/>
            <person name="Ashurst J.L."/>
            <person name="Taylor A."/>
            <person name="Battles J."/>
            <person name="Bird C.P."/>
            <person name="Ainscough R."/>
            <person name="Almeida J.P."/>
            <person name="Ashwell R.I.S."/>
            <person name="Ambrose K.D."/>
            <person name="Babbage A.K."/>
            <person name="Bagguley C.L."/>
            <person name="Bailey J."/>
            <person name="Banerjee R."/>
            <person name="Bates K."/>
            <person name="Beasley H."/>
            <person name="Bray-Allen S."/>
            <person name="Brown A.J."/>
            <person name="Brown J.Y."/>
            <person name="Burford D.C."/>
            <person name="Burrill W."/>
            <person name="Burton J."/>
            <person name="Cahill P."/>
            <person name="Camire D."/>
            <person name="Carter N.P."/>
            <person name="Chapman J.C."/>
            <person name="Clark S.Y."/>
            <person name="Clarke G."/>
            <person name="Clee C.M."/>
            <person name="Clegg S."/>
            <person name="Corby N."/>
            <person name="Coulson A."/>
            <person name="Dhami P."/>
            <person name="Dutta I."/>
            <person name="Dunn M."/>
            <person name="Faulkner L."/>
            <person name="Frankish A."/>
            <person name="Frankland J.A."/>
            <person name="Garner P."/>
            <person name="Garnett J."/>
            <person name="Gribble S."/>
            <person name="Griffiths C."/>
            <person name="Grocock R."/>
            <person name="Gustafson E."/>
            <person name="Hammond S."/>
            <person name="Harley J.L."/>
            <person name="Hart E."/>
            <person name="Heath P.D."/>
            <person name="Ho T.P."/>
            <person name="Hopkins B."/>
            <person name="Horne J."/>
            <person name="Howden P.J."/>
            <person name="Huckle E."/>
            <person name="Hynds C."/>
            <person name="Johnson C."/>
            <person name="Johnson D."/>
            <person name="Kana A."/>
            <person name="Kay M."/>
            <person name="Kimberley A.M."/>
            <person name="Kershaw J.K."/>
            <person name="Kokkinaki M."/>
            <person name="Laird G.K."/>
            <person name="Lawlor S."/>
            <person name="Lee H.M."/>
            <person name="Leongamornlert D.A."/>
            <person name="Laird G."/>
            <person name="Lloyd C."/>
            <person name="Lloyd D.M."/>
            <person name="Loveland J."/>
            <person name="Lovell J."/>
            <person name="McLaren S."/>
            <person name="McLay K.E."/>
            <person name="McMurray A."/>
            <person name="Mashreghi-Mohammadi M."/>
            <person name="Matthews L."/>
            <person name="Milne S."/>
            <person name="Nickerson T."/>
            <person name="Nguyen M."/>
            <person name="Overton-Larty E."/>
            <person name="Palmer S.A."/>
            <person name="Pearce A.V."/>
            <person name="Peck A.I."/>
            <person name="Pelan S."/>
            <person name="Phillimore B."/>
            <person name="Porter K."/>
            <person name="Rice C.M."/>
            <person name="Rogosin A."/>
            <person name="Ross M.T."/>
            <person name="Sarafidou T."/>
            <person name="Sehra H.K."/>
            <person name="Shownkeen R."/>
            <person name="Skuce C.D."/>
            <person name="Smith M."/>
            <person name="Standring L."/>
            <person name="Sycamore N."/>
            <person name="Tester J."/>
            <person name="Thorpe A."/>
            <person name="Torcasso W."/>
            <person name="Tracey A."/>
            <person name="Tromans A."/>
            <person name="Tsolas J."/>
            <person name="Wall M."/>
            <person name="Walsh J."/>
            <person name="Wang H."/>
            <person name="Weinstock K."/>
            <person name="West A.P."/>
            <person name="Willey D.L."/>
            <person name="Whitehead S.L."/>
            <person name="Wilming L."/>
            <person name="Wray P.W."/>
            <person name="Young L."/>
            <person name="Chen Y."/>
            <person name="Lovering R.C."/>
            <person name="Moschonas N.K."/>
            <person name="Siebert R."/>
            <person name="Fechtel K."/>
            <person name="Bentley D."/>
            <person name="Durbin R.M."/>
            <person name="Hubbard T."/>
            <person name="Doucette-Stamm L."/>
            <person name="Beck S."/>
            <person name="Smith D.R."/>
            <person name="Rogers J."/>
        </authorList>
    </citation>
    <scope>NUCLEOTIDE SEQUENCE [LARGE SCALE GENOMIC DNA]</scope>
</reference>
<reference key="4">
    <citation type="journal article" date="2000" name="DNA Res.">
        <title>Prediction of the coding sequences of unidentified human genes. XIX. The complete sequences of 100 new cDNA clones from brain which code for large proteins in vitro.</title>
        <authorList>
            <person name="Nagase T."/>
            <person name="Kikuno R."/>
            <person name="Hattori A."/>
            <person name="Kondo Y."/>
            <person name="Okumura K."/>
            <person name="Ohara O."/>
        </authorList>
    </citation>
    <scope>NUCLEOTIDE SEQUENCE [LARGE SCALE MRNA] OF 1402-2136</scope>
    <source>
        <tissue>Brain</tissue>
    </source>
</reference>
<reference key="5">
    <citation type="journal article" date="2007" name="BMC Genomics">
        <title>The full-ORF clone resource of the German cDNA consortium.</title>
        <authorList>
            <person name="Bechtel S."/>
            <person name="Rosenfelder H."/>
            <person name="Duda A."/>
            <person name="Schmidt C.P."/>
            <person name="Ernst U."/>
            <person name="Wellenreuther R."/>
            <person name="Mehrle A."/>
            <person name="Schuster C."/>
            <person name="Bahr A."/>
            <person name="Bloecker H."/>
            <person name="Heubner D."/>
            <person name="Hoerlein A."/>
            <person name="Michel G."/>
            <person name="Wedler H."/>
            <person name="Koehrer K."/>
            <person name="Ottenwaelder B."/>
            <person name="Poustka A."/>
            <person name="Wiemann S."/>
            <person name="Schupp I."/>
        </authorList>
    </citation>
    <scope>NUCLEOTIDE SEQUENCE [LARGE SCALE MRNA] OF 1665-2074</scope>
    <source>
        <tissue>Brain</tissue>
    </source>
</reference>
<reference key="6">
    <citation type="journal article" date="2004" name="Genome Res.">
        <title>The status, quality, and expansion of the NIH full-length cDNA project: the Mammalian Gene Collection (MGC).</title>
        <authorList>
            <consortium name="The MGC Project Team"/>
        </authorList>
    </citation>
    <scope>NUCLEOTIDE SEQUENCE [LARGE SCALE MRNA] OF 1809-2136</scope>
    <source>
        <tissue>Uterus</tissue>
    </source>
</reference>
<reference key="7">
    <citation type="journal article" date="2003" name="Leukemia">
        <title>TET1, a member of a novel protein family, is fused to MLL in acute myeloid leukemia containing the t(10;11)(q22;q23).</title>
        <authorList>
            <person name="Lorsbach R.B."/>
            <person name="Moore J."/>
            <person name="Mathew S."/>
            <person name="Raimondi S.C."/>
            <person name="Mukatira S.T."/>
            <person name="Downing J.R."/>
        </authorList>
    </citation>
    <scope>CHROMOSOMAL TRANSLOCATION WITH KMT2A/MLL1</scope>
    <scope>TISSUE SPECIFICITY</scope>
    <scope>INVOLVEMENT IN ACUTE LEUKEMIAS</scope>
</reference>
<reference key="8">
    <citation type="journal article" date="2009" name="Science">
        <title>The nuclear DNA base 5-hydroxymethylcytosine is present in Purkinje neurons and the brain.</title>
        <authorList>
            <person name="Kriaucionis S."/>
            <person name="Heintz N."/>
        </authorList>
    </citation>
    <scope>FUNCTION</scope>
</reference>
<reference key="9">
    <citation type="journal article" date="2009" name="Science">
        <title>Conversion of 5-methylcytosine to 5-hydroxymethylcytosine in mammalian DNA by the MLL fusion partner TET1.</title>
        <authorList>
            <person name="Tahiliani M."/>
            <person name="Koh K.P."/>
            <person name="Shen Y."/>
            <person name="Pastor W.A."/>
            <person name="Bandukwala H."/>
            <person name="Brudno Y."/>
            <person name="Agarwal S."/>
            <person name="Iyer L.M."/>
            <person name="Liu D.R."/>
            <person name="Aravind L."/>
            <person name="Rao A."/>
        </authorList>
    </citation>
    <scope>FUNCTION</scope>
    <scope>CATALYTIC ACTIVITY</scope>
    <scope>DNA-BINDING</scope>
    <scope>COFACTOR</scope>
    <scope>MUTAGENESIS OF HIS-1672 AND ASP-1674</scope>
</reference>
<reference key="10">
    <citation type="journal article" date="2011" name="Cell">
        <title>Hydroxylation of 5-methylcytosine by TET1 promotes active DNA demethylation in the adult brain.</title>
        <authorList>
            <person name="Guo J.U."/>
            <person name="Su Y."/>
            <person name="Zhong C."/>
            <person name="Ming G.L."/>
            <person name="Song H."/>
        </authorList>
    </citation>
    <scope>FUNCTION IN DNA DEMETHYLATION</scope>
    <scope>CATALYTIC ACTIVITY</scope>
    <scope>MUTAGENESIS OF HIS-1672 AND ASP-1674</scope>
</reference>
<reference key="11">
    <citation type="journal article" date="2011" name="Nature">
        <title>TET1 and hydroxymethylcytosine in transcription and DNA methylation fidelity.</title>
        <authorList>
            <person name="Williams K."/>
            <person name="Christensen J."/>
            <person name="Pedersen M.T."/>
            <person name="Johansen J.V."/>
            <person name="Cloos P.A."/>
            <person name="Rappsilber J."/>
            <person name="Helin K."/>
        </authorList>
    </citation>
    <scope>INTERACTION WITH SIN3A</scope>
</reference>
<reference key="12">
    <citation type="journal article" date="2011" name="Science">
        <title>Tet proteins can convert 5-methylcytosine to 5-formylcytosine and 5-carboxylcytosine.</title>
        <authorList>
            <person name="Ito S."/>
            <person name="Shen L."/>
            <person name="Dai Q."/>
            <person name="Wu S.C."/>
            <person name="Collins L.B."/>
            <person name="Swenberg J.A."/>
            <person name="He C."/>
            <person name="Zhang Y."/>
        </authorList>
    </citation>
    <scope>FUNCTION</scope>
</reference>
<reference key="13">
    <citation type="journal article" date="2013" name="J. Proteome Res.">
        <title>Toward a comprehensive characterization of a human cancer cell phosphoproteome.</title>
        <authorList>
            <person name="Zhou H."/>
            <person name="Di Palma S."/>
            <person name="Preisinger C."/>
            <person name="Peng M."/>
            <person name="Polat A.N."/>
            <person name="Heck A.J."/>
            <person name="Mohammed S."/>
        </authorList>
    </citation>
    <scope>PHOSPHORYLATION [LARGE SCALE ANALYSIS] AT SER-871</scope>
    <scope>IDENTIFICATION BY MASS SPECTROMETRY [LARGE SCALE ANALYSIS]</scope>
    <source>
        <tissue>Erythroleukemia</tissue>
    </source>
</reference>
<reference key="14">
    <citation type="journal article" date="2013" name="Science">
        <title>CRL4 complex regulates mammalian oocyte survival and reprogramming by activation of TET proteins.</title>
        <authorList>
            <person name="Yu C."/>
            <person name="Zhang Y.L."/>
            <person name="Pan W.W."/>
            <person name="Li X.M."/>
            <person name="Wang Z.W."/>
            <person name="Ge Z.J."/>
            <person name="Zhou J.J."/>
            <person name="Cang Y."/>
            <person name="Tong C."/>
            <person name="Sun Q.Y."/>
            <person name="Fan H.Y."/>
        </authorList>
    </citation>
    <scope>INTERACTION WITH DCAF1</scope>
</reference>
<reference key="15">
    <citation type="journal article" date="2014" name="Cell Rep.">
        <title>5-Hydroxymethylcytosine plays a critical role in glioblastomagenesis by recruiting the CHTOP-methylosome complex.</title>
        <authorList>
            <person name="Takai H."/>
            <person name="Masuda K."/>
            <person name="Sato T."/>
            <person name="Sakaguchi Y."/>
            <person name="Suzuki T."/>
            <person name="Suzuki T."/>
            <person name="Koyama-Nasu R."/>
            <person name="Nasu-Nishimura Y."/>
            <person name="Katou Y."/>
            <person name="Ogawa H."/>
            <person name="Morishita Y."/>
            <person name="Kozuka-Hata H."/>
            <person name="Oyama M."/>
            <person name="Todo T."/>
            <person name="Ino Y."/>
            <person name="Mukasa A."/>
            <person name="Saito N."/>
            <person name="Toyoshima C."/>
            <person name="Shirahige K."/>
            <person name="Akiyama T."/>
        </authorList>
    </citation>
    <scope>INVOLVEMENT IN GLIOBLASTOMA GENESIS</scope>
    <scope>TISSUE SPECIFICITY</scope>
</reference>
<reference key="16">
    <citation type="journal article" date="2015" name="Mol. Cell">
        <title>CRL4(VprBP) E3 ligase promotes monoubiquitylation and chromatin binding of TET dioxygenases.</title>
        <authorList>
            <person name="Nakagawa T."/>
            <person name="Lv L."/>
            <person name="Nakagawa M."/>
            <person name="Yu Y."/>
            <person name="Yu C."/>
            <person name="D'Alessio A.C."/>
            <person name="Nakayama K."/>
            <person name="Fan H.Y."/>
            <person name="Chen X."/>
            <person name="Xiong Y."/>
        </authorList>
    </citation>
    <scope>INTERACTION WITH DCAF1</scope>
    <scope>MONOUBIQITINATION AT LYS-1589</scope>
</reference>
<reference key="17">
    <citation type="journal article" date="2017" name="Nucleic Acids Res.">
        <title>A novel isoform of TET1 that lacks a CXXC domain is overexpressed in cancer.</title>
        <authorList>
            <person name="Good C.R."/>
            <person name="Madzo J."/>
            <person name="Patel B."/>
            <person name="Maegawa S."/>
            <person name="Engel N."/>
            <person name="Jelinek J."/>
            <person name="Issa J.J."/>
        </authorList>
    </citation>
    <scope>FUNCTION</scope>
    <scope>IDENTIFICATION OF ISOFORM 2</scope>
    <scope>ALTERNATIVE PROMOTER USAGE</scope>
    <scope>TISSUE SPECIFICITY</scope>
</reference>
<reference key="18">
    <citation type="journal article" date="2019" name="Toxicol. Appl. Pharmacol.">
        <title>TET1 regulates DNA repair in human glial cells.</title>
        <authorList>
            <person name="Kuhns K.J."/>
            <person name="Lopez-Bertoni H."/>
            <person name="Coulter J.B."/>
            <person name="Bressler J.P."/>
        </authorList>
    </citation>
    <scope>FUNCTION IN DNA REPAIR</scope>
</reference>
<reference key="19">
    <citation type="journal article" date="2021" name="Science">
        <title>QSER1 protects DNA methylation valleys from de novo methylation.</title>
        <authorList>
            <person name="Dixon G."/>
            <person name="Pan H."/>
            <person name="Yang D."/>
            <person name="Rosen B.P."/>
            <person name="Jashari T."/>
            <person name="Verma N."/>
            <person name="Pulecio J."/>
            <person name="Caspi I."/>
            <person name="Lee K."/>
            <person name="Stransky S."/>
            <person name="Glezer A."/>
            <person name="Liu C."/>
            <person name="Rivas M."/>
            <person name="Kumar R."/>
            <person name="Lan Y."/>
            <person name="Torregroza I."/>
            <person name="He C."/>
            <person name="Sidoli S."/>
            <person name="Evans T."/>
            <person name="Elemento O."/>
            <person name="Huangfu D."/>
        </authorList>
    </citation>
    <scope>FUNCTION</scope>
    <scope>INTERACTION WITH QSER1</scope>
    <scope>SUBCELLULAR LOCATION</scope>
</reference>
<reference key="20">
    <citation type="journal article" date="2022" name="Nat. Commun.">
        <title>TET1 dioxygenase is required for FOXA2-associated chromatin remodeling in pancreatic beta-cell differentiation.</title>
        <authorList>
            <person name="Li J."/>
            <person name="Wu X."/>
            <person name="Ke J."/>
            <person name="Lee M."/>
            <person name="Lan Q."/>
            <person name="Li J."/>
            <person name="Yu J."/>
            <person name="Huang Y."/>
            <person name="Sun D.Q."/>
            <person name="Xie R."/>
        </authorList>
    </citation>
    <scope>FUNCTION</scope>
    <scope>MUTAGENESIS OF HIS-1672 AND ASP-1674</scope>
    <scope>INTERACTION WITH FOXA2</scope>
</reference>
<reference key="21">
    <citation type="journal article" date="2022" name="Nat. Commun.">
        <title>Isoform-specific and ubiquitination dependent recruitment of Tet1 to replicating heterochromatin modulates methylcytosine oxidation.</title>
        <authorList>
            <person name="Arroyo M."/>
            <person name="Hastert F.D."/>
            <person name="Zhadan A."/>
            <person name="Schelter F."/>
            <person name="Zimbelmann S."/>
            <person name="Rausch C."/>
            <person name="Ludwig A.K."/>
            <person name="Carell T."/>
            <person name="Cardoso M.C."/>
        </authorList>
    </citation>
    <scope>SUBCELLULAR LOCATION</scope>
    <scope>IDENTIFICATION OF ISOFORM 2</scope>
    <scope>UBIQUITINATION AT LYS-1589</scope>
</reference>
<reference evidence="32" key="22">
    <citation type="journal article" date="2018" name="Structure">
        <title>DNA Sequence Recognition of Human CXXC Domains and Their Structural Determinants.</title>
        <authorList>
            <person name="Xu C."/>
            <person name="Liu K."/>
            <person name="Lei M."/>
            <person name="Yang A."/>
            <person name="Li Y."/>
            <person name="Hughes T.R."/>
            <person name="Min J."/>
        </authorList>
    </citation>
    <scope>X-RAY CRYSTALLOGRAPHY (1.85 ANGSTROMS) OF 587-632 IN COMPLEX WITH CPG DNA</scope>
    <scope>FUNCTION</scope>
    <scope>DOMAIN CXXC-TYPE ZINC-FINGER</scope>
    <scope>ZINC-BINDING</scope>
</reference>
<reference key="23">
    <citation type="journal article" date="2018" name="Mol. Psychiatry">
        <title>Mapping autosomal recessive intellectual disability: combined microarray and exome sequencing identifies 26 novel candidate genes in 192 consanguineous families.</title>
        <authorList>
            <person name="Harripaul R."/>
            <person name="Vasli N."/>
            <person name="Mikhailov A."/>
            <person name="Rafiq M.A."/>
            <person name="Mittal K."/>
            <person name="Windpassinger C."/>
            <person name="Sheikh T.I."/>
            <person name="Noor A."/>
            <person name="Mahmood H."/>
            <person name="Downey S."/>
            <person name="Johnson M."/>
            <person name="Vleuten K."/>
            <person name="Bell L."/>
            <person name="Ilyas M."/>
            <person name="Khan F.S."/>
            <person name="Khan V."/>
            <person name="Moradi M."/>
            <person name="Ayaz M."/>
            <person name="Naeem F."/>
            <person name="Heidari A."/>
            <person name="Ahmed I."/>
            <person name="Ghadami S."/>
            <person name="Agha Z."/>
            <person name="Zeinali S."/>
            <person name="Qamar R."/>
            <person name="Mozhdehipanah H."/>
            <person name="John P."/>
            <person name="Mir A."/>
            <person name="Ansar M."/>
            <person name="French L."/>
            <person name="Ayub M."/>
            <person name="Vincent J.B."/>
        </authorList>
    </citation>
    <scope>VARIANT ASN-2056</scope>
</reference>
<sequence>MSRSRHARPSRLVRKEDVNKKKKNSQLRKTTKGANKNVASVKTLSPGKLKQLIQERDVKKKTEPKPPVPVRSLLTRAGAARMNLDRTEVLFQNPESLTCNGFTMALRSTSLSRRLSQPPLVVAKSKKVPLSKGLEKQHDCDYKILPALGVKHSENDSVPMQDTQVLPDIETLIGVQNPSLLKGKSQETTQFWSQRVEDSKINIPTHSGPAAEILPGPLEGTRCGEGLFSEETLNDTSGSPKMFAQDTVCAPFPQRATPKVTSQGNPSIQLEELGSRVESLKLSDSYLDPIKSEHDCYPTSSLNKVIPDLNLRNCLALGGSTSPTSVIKFLLAGSKQATLGAKPDHQEAFEATANQQEVSDTTSFLGQAFGAIPHQWELPGADPVHGEALGETPDLPEIPGAIPVQGEVFGTILDQQETLGMSGSVVPDLPVFLPVPPNPIATFNAPSKWPEPQSTVSYGLAVQGAIQILPLGSGHTPQSSSNSEKNSLPPVMAISNVENEKQVHISFLPANTQGFPLAPERGLFHASLGIAQLSQAGPSKSDRGSSQVSVTSTVHVVNTTVVTMPVPMVSTSSSSYTTLLPTLEKKKRKRCGVCEPCQQKTNCGECTYCKNRKNSHQICKKRKCEELKKKPSVVVPLEVIKENKRPQREKKPKVLKADFDNKPVNGPKSESMDYSRCGHGEEQKLELNPHTVENVTKNEDSMTGIEVEKWTQNKKSQLTDHVKGDFSANVPEAEKSKNSEVDKKRTKSPKLFVQTVRNGIKHVHCLPAETNVSFKKFNIEEFGKTLENNSYKFLKDTANHKNAMSSVATDMSCDHLKGRSNVLVFQQPGFNCSSIPHSSHSIINHHASIHNEGDQPKTPENIPSKEPKDGSPVQPSLLSLMKDRRLTLEQVVAIEALTQLSEAPSENSSPSKSEKDEESEQRTASLLNSCKAILYTVRKDLQDPNLQGEPPKLNHCPSLEKQSSCNTVVFNGQTTTLSNSHINSATNQASTKSHEYSKVTNSLSLFIPKSNSSKIDTNKSIAQGIITLDNCSNDLHQLPPRNNEVEYCNQLLDSSKKLDSDDLSCQDATHTQIEEDVATQLTQLASIIKINYIKPEDKKVESTPTSLVTCNVQQKYNQEKGTIQQKPPSSVHNNHGSSLTKQKNPTQKKTKSTPSRDRRKKKPTVVSYQENDRQKWEKLSYMYGTICDIWIASKFQNFGQFCPHDFPTVFGKISSSTKIWKPLAQTRSIMQPKTVFPPLTQIKLQRYPESAEEKVKVEPLDSLSLFHLKTESNGKAFTDKAYNSQVQLTVNANQKAHPLTQPSSPPNQCANVMAGDDQIRFQQVVKEQLMHQRLPTLPGISHETPLPESALTLRNVNVVCSGGITVVSTKSEEEVCSSSFGTSEFSTVDSAQKNFNDYAMNFFTNPTKNLVSITKDSELPTCSCLDRVIQKDKGPYYTHLGAGPSVAAVREIMENRYGQKGNAIRIEIVVYTGKEGKSSHGCPIAKWVLRRSSDEEKVLCLVRQRTGHHCPTAVMVVLIMVWDGIPLPMADRLYTELTENLKSYNGHPTDRRCTLNENRTCTCQGIDPETCGASFSFGCSWSMYFNGCKFGRSPSPRRFRIDPSSPLHEKNLEDNLQSLATRLAPIYKQYAPVAYQNQVEYENVARECRLGSKEGRPFSGVTACLDFCAHPHRDIHNMNNGSTVVCTLTREDNRSLGVIPQDEQLHVLPLYKLSDTDEFGSKEGMEAKIKSGAIEVLAPRRKKRTCFTQPVPRSGKKRAAMMTEVLAHKIRAVEKKPIPRIKRKNNSTTTNNSKPSSLPTLGSNTETVQPEVKSETEPHFILKSSDNTKTYSLMPSAPHPVKEASPGFSWSPKTASATPAPLKNDATASCGFSERSSTPHCTMPSGRLSGANAAAADGPGISQLGEVAPLPTLSAPVMEPLINSEPSTGVTEPLTPHQPNHQPSFLTSPQDLASSPMEEDEQHSEADEPPSDEPLSDDPLSPAEEKLPHIDEYWSDSEHIFLDANIGGVAIAPAHGSVLIECARRELHATTPVEHPNRNHPTRLSLVFYQHKNLNKPQHGFELNKIKFEAKEAKNKKMKASEQKDQAANEGPEQSSEVNELNQIPSHKALTLTHDNVVTVSPYALTHVAGPYNHWV</sequence>
<gene>
    <name evidence="23 31" type="primary">TET1</name>
    <name type="synonym">CXXC6</name>
    <name type="synonym">KIAA1676</name>
    <name type="synonym">LCX</name>
</gene>
<comment type="function">
    <text evidence="1 5 7 8 10 11 13 17 18 19 20">Dioxygenase that plays a key role in active DNA demethylation, by catalyzing the sequential oxidation of the modified genomic base 5-methylcytosine (5mC) into 5-hydroxymethylcytosine (5hmC), 5-formylcytosine (5fC), and 5-carboxylcytosine (5caC) (PubMed:19372391, PubMed:21496894, PubMed:21778364, PubMed:35798741). In addition to its role in DNA demethylation, plays a more general role in chromatin regulation by recruiting histone modifying protein complexes to alter histone marks and chromatin accessibility, leading to both activation and repression of gene expression (PubMed:33833093). Plays therefore a role in many biological processes, including stem cell maintenance, T- and B-cell development, inflammation regulation, genomic imprinting, neural activity or DNA repair (PubMed:31278917). Involved in the balance between pluripotency and lineage commitment of cells and plays a role in embryonic stem cells maintenance and inner cell mass cell specification. Together with QSER1, plays an essential role in the protection and maintenance of transcriptional and developmental programs to inhibit the binding of DNMT3A/3B and therefore de novo methylation (PubMed:33833093). May play a role in pancreatic beta-cell specification during development. In this context, may function as an upstream epigenetic regulator of PAX4 presumably through direct recruitment by FOXA2 to a PAX4 enhancer to preserve its unmethylated status, thereby potentiating PAX4 expression to adopt beta-cell fate during endocrine lineage commitment (PubMed:35798741). Under DNA hypomethylation conditions, such as in female meiotic germ cells, may induce epigenetic reprogramming of pericentromeric heterochromatin (PCH), the constitutive heterochromatin of pericentromeric regions. PCH forms chromocenters in the interphase nucleus and chromocenters cluster at the prophase of meiosis. In this context, may also be essential for chromocenter clustering in a catalytic activity-independent manner, possibly through the recruitment polycomb repressive complex 1 (PRC1) to the chromocenters (By similarity). During embryonic development, may be required for normal meiotic progression in oocytes and meiotic gene activation (By similarity). Binds preferentially to DNA containing cytidine-phosphate-guanosine (CpG) dinucleotides over CpH (H=A, T, and C), hemimethylated-CpG and hemimethylated-hydroxymethyl-CpG (PubMed:29276034).</text>
</comment>
<comment type="function">
    <molecule>Isoform 1</molecule>
    <text evidence="1 16">Dioxygenase that plays a key role in active DNA demethylation (PubMed:28531272). Binds to promoters, particularly to those with high CG content (By similarity). In hippocampal neurons, isoform 1 regulates the expression of a unique subset of genes compared to isoform 2, although some overlap exists between both isoforms, hence differentially regulates excitatory synaptic transmission (By similarity). In hippocampal neuron cell cultures, isoform 1 controls both miniature excitatory postsynaptic current amplitude and frequency (By similarity). Isoform 1 may regulate genes involved in hippocampal-dependent memory, leading to positive regulation of memory, contrary to isoform 2 that may decrease memory (By similarity).</text>
</comment>
<comment type="function">
    <molecule>Isoform 2</molecule>
    <text evidence="1 16">Dioxygenase that plays a key role in active DNA demethylation (PubMed:28531272). As isoform 1, binds to promoters, particularly to those with high CG content, however displays reduced global chromatin affinity compared with isoform 1, leading to decreased global DNA demethylation compared with isoform 1 (By similarity). Contrary to isoform 1, isoform 2 localizes during S phase to sites of ongoing DNA replication in heterochromatin, causing a significant de novo 5hmC formation, globally, and more so in heterochromatin, including LINE 1 interspersed DNA repeats leading to their activation (By similarity). In hippocampal neurons, isoform 2 regulates the expression of a unique subset of genes compared to isoform 1, although some overlap between both isoforms, hence differentially regulates excitatory synaptic transmission (By similarity). In hippocampal neuron cell cultures, isoform 2 controls miniature excitatory postsynaptic current frequency, but not amplitude (By similarity). Isoform 2 may regulate genes involved in hippocampal-dependent memory, leading to negative regulation of memory, contrary to isoform 1 that may improve memory (By similarity). In immature and partially differentiated gonadotrope cells, directly represses luteinizing hormone gene LHB expression and does not catalyze 5hmC at the gene promoter (By similarity).</text>
</comment>
<comment type="catalytic activity">
    <reaction evidence="7 10">
        <text>a 5-methyl-2'-deoxycytidine in DNA + 2-oxoglutarate + O2 = a 5-hydroxymethyl-2'-deoxycytidine in DNA + succinate + CO2</text>
        <dbReference type="Rhea" id="RHEA:52636"/>
        <dbReference type="Rhea" id="RHEA-COMP:11370"/>
        <dbReference type="Rhea" id="RHEA-COMP:13315"/>
        <dbReference type="ChEBI" id="CHEBI:15379"/>
        <dbReference type="ChEBI" id="CHEBI:16526"/>
        <dbReference type="ChEBI" id="CHEBI:16810"/>
        <dbReference type="ChEBI" id="CHEBI:30031"/>
        <dbReference type="ChEBI" id="CHEBI:85454"/>
        <dbReference type="ChEBI" id="CHEBI:136731"/>
        <dbReference type="EC" id="1.14.11.80"/>
    </reaction>
</comment>
<comment type="catalytic activity">
    <reaction evidence="28">
        <text>a 5-hydroxymethyl-2'-deoxycytidine in DNA + 2-oxoglutarate + O2 = a 5-formyl-2'-deoxycytidine in DNA + succinate + CO2 + H2O</text>
        <dbReference type="Rhea" id="RHEA:53828"/>
        <dbReference type="Rhea" id="RHEA-COMP:13315"/>
        <dbReference type="Rhea" id="RHEA-COMP:13656"/>
        <dbReference type="ChEBI" id="CHEBI:15377"/>
        <dbReference type="ChEBI" id="CHEBI:15379"/>
        <dbReference type="ChEBI" id="CHEBI:16526"/>
        <dbReference type="ChEBI" id="CHEBI:16810"/>
        <dbReference type="ChEBI" id="CHEBI:30031"/>
        <dbReference type="ChEBI" id="CHEBI:136731"/>
        <dbReference type="ChEBI" id="CHEBI:137731"/>
        <dbReference type="EC" id="1.14.11.80"/>
    </reaction>
</comment>
<comment type="catalytic activity">
    <reaction evidence="28">
        <text>a 5-formyl-2'-deoxycytidine in DNA + 2-oxoglutarate + O2 = a 5-carboxyl-2'-deoxycytidine in DNA + succinate + CO2 + H(+)</text>
        <dbReference type="Rhea" id="RHEA:53832"/>
        <dbReference type="Rhea" id="RHEA-COMP:13656"/>
        <dbReference type="Rhea" id="RHEA-COMP:13657"/>
        <dbReference type="ChEBI" id="CHEBI:15378"/>
        <dbReference type="ChEBI" id="CHEBI:15379"/>
        <dbReference type="ChEBI" id="CHEBI:16526"/>
        <dbReference type="ChEBI" id="CHEBI:16810"/>
        <dbReference type="ChEBI" id="CHEBI:30031"/>
        <dbReference type="ChEBI" id="CHEBI:137731"/>
        <dbReference type="ChEBI" id="CHEBI:137732"/>
        <dbReference type="EC" id="1.14.11.80"/>
    </reaction>
</comment>
<comment type="cofactor">
    <cofactor evidence="7">
        <name>Fe(2+)</name>
        <dbReference type="ChEBI" id="CHEBI:29033"/>
    </cofactor>
    <text evidence="7">Binds 1 Fe(2+) ion per subunit.</text>
</comment>
<comment type="cofactor">
    <cofactor evidence="2">
        <name>Zn(2+)</name>
        <dbReference type="ChEBI" id="CHEBI:29105"/>
    </cofactor>
    <text evidence="2">Binds 3 zinc ions per subunit. The zinc ions have a structural role.</text>
</comment>
<comment type="subunit">
    <text evidence="1 9 12 14 19 20">Interacts with SIN3A; recruits the transcriptional corepressor SIN3A to gene promoters (PubMed:21490601). Interacts with HCFC1 (By similarity). Interacts (via C-terminus) with OGT (By similarity). Found in a complex composed of at least SINHCAF, SIN3A, HDAC1, SAP30, RBBP4, OGT and TET1 (By similarity). Interacts with QSER1 (PubMed:33833093). Interacts with NONO (via DNA-binding domain); this interaction recruits TET1 to genomic loci (By similarity). Interacts with FOXA2; this interaction may recruit TET1 to specific enhancers to preserve their unmethylated status and hence allowing gene expression (PubMed:35798741). Interacts with RNF2 (By similarity). Directly interacts (via C-terminus) with the DCAF1 component of the CRL4(VprBP) E3 ubiquitin-protein ligase complex (PubMed:24357321, PubMed:25557551).</text>
</comment>
<comment type="subunit">
    <molecule>Isoform 2</molecule>
    <text evidence="21">Interacts with UHRF1; this interaction induces the recruitment of TET1 to replicating heterochromatin (PubMed:36056023). Interacts with DCAF1 (PubMed:36056023).</text>
</comment>
<comment type="subcellular location">
    <subcellularLocation>
        <location evidence="1">Nucleus</location>
    </subcellularLocation>
    <subcellularLocation>
        <location evidence="19">Chromosome</location>
    </subcellularLocation>
    <text evidence="14">Localization to chromatin is promoted by monoubiquitination on Lys-1589.</text>
</comment>
<comment type="subcellular location">
    <molecule>Isoform 1</molecule>
    <subcellularLocation>
        <location evidence="21">Nucleus</location>
    </subcellularLocation>
    <subcellularLocation>
        <location evidence="1">Chromosome</location>
    </subcellularLocation>
    <text evidence="1">Contrary to isoform 2, which accumulates at sites of ongoing DNA replication in heterochromatin, isoform 1 shows a homogenous nuclear pattern during mitotic S phase.</text>
</comment>
<comment type="subcellular location">
    <molecule>Isoform 2</molecule>
    <subcellularLocation>
        <location evidence="21">Nucleus</location>
    </subcellularLocation>
    <subcellularLocation>
        <location evidence="1">Chromosome</location>
    </subcellularLocation>
    <text evidence="21">During DNA replication, localizes to sites of ongoing DNA replication in heterochromatin (in late S phase) in an UHRF1- and CRL4(VprBP)-dependent manner, as a consequence of ubiquitination of the conserved residue Lys-1589. Localization to heterochromatin is independent of catalytic activity.</text>
</comment>
<comment type="alternative products">
    <event type="alternative promoter"/>
    <event type="alternative splicing"/>
    <isoform>
        <id>Q8NFU7-1</id>
        <name>1</name>
        <name evidence="24">TET1-FL</name>
        <sequence type="displayed"/>
    </isoform>
    <isoform>
        <id>Q8NFU7-2</id>
        <name>2</name>
        <name evidence="25">TET1s</name>
        <name evidence="24">TET1-ALT</name>
        <sequence type="described" ref="VSP_061826"/>
    </isoform>
    <isoform>
        <id>Q8NFU7-3</id>
        <name>3</name>
        <sequence type="described" ref="VSP_061827"/>
    </isoform>
    <isoform>
        <id>Q8NFU7-4</id>
        <name>4</name>
        <sequence type="described" ref="VSP_061828 VSP_061829"/>
    </isoform>
    <text evidence="1">During development, a switch between isoforms 1 and 2 regulates DNA demethylation, imprint erasure and gene regulation. The switch may be controlled by alternative promoters.</text>
</comment>
<comment type="tissue specificity">
    <text evidence="5 6 13">Expressed in fetal heart, lung and brain, and in adult skeletal muscle, thymus and ovary. Not detected in adult heart, lung or brain. Up-regulated in glioblastoma cells (at protein level) (PubMed:25284789).</text>
</comment>
<comment type="tissue specificity">
    <molecule>Isoform 1</molecule>
    <text evidence="16">Expressed in embryonic stem cells (at protein level).</text>
</comment>
<comment type="domain">
    <text evidence="1 17 21">The CXXC zinc finger plays a role in TET1 chromatin loading and participates in binding to CpG-DNA (PubMed:29276034). However, the global chromatin binding can be mediated by the entire N-terminus and occurs even in the absence of the CXXC domain (By similarity). The zinc finger domain impedes association DNA replication sites and prevents aberrant 5mC oxidation (PubMed:36056023).</text>
</comment>
<comment type="PTM">
    <text evidence="1">Glycosylated. Interaction with OGT leads to GlcNAcylation (By similarity).</text>
</comment>
<comment type="PTM">
    <text evidence="14">Monoubiquitinated at Lys-1589 by the DCX (DDB1-CUL4-X-box) E3 ubiquitin-protein ligase complex called CRL4(VprBP) or CUL4A-RBX1-DDB1-DCAF1/VPRBP complex; this modification promotes binding to DNA.</text>
</comment>
<comment type="disease">
    <text evidence="5 6 13">A chromosomal aberration involving TET1 may be a cause of acute leukemias (PubMed:12646957). Translocation t(10;11)(q22;q23) with KMT2A/MLL1. This is a rare chromosomal translocation 5' KMT2A/MLL1-TET1 3' (PubMed:12124344, PubMed:12646957). Plays an important role in the tumorigenicity of glioblastoma cells. TET1-mediated production of 5hmC acts as a recruitment signal for the CHTOP-methylosome complex to selective sites on the chromosome, where it methylates H4R3 and activates the transcription of genes involved in glioblastoma genesis (PubMed:25284789).</text>
</comment>
<comment type="miscellaneous">
    <molecule>Isoform 2</molecule>
    <text evidence="29">Produced by alternative promoter usage.</text>
</comment>
<comment type="miscellaneous">
    <molecule>Isoform 3</molecule>
    <text evidence="30">Produced by alternative splicing.</text>
</comment>
<comment type="miscellaneous">
    <molecule>Isoform 4</molecule>
    <text evidence="30">Produced by alternative splicing.</text>
</comment>
<comment type="similarity">
    <text evidence="26">Belongs to the TET family.</text>
</comment>
<comment type="caution">
    <text evidence="27">Subsequent steps in cytosine demethylation are subject to discussion. According to a first model cytosine demethylation occurs through deamination of 5hmC into 5-hydroxymethyluracil (5hmU) and subsequent replacement by unmethylated cytosine by the base excision repair system (PubMed:21496894). According to another model, cytosine demethylation is rather mediated via conversion of 5hmC into 5fC and 5caC, followed by excision by TDG and replacement by unmethylated cytosine.</text>
</comment>
<comment type="sequence caution" evidence="26">
    <conflict type="miscellaneous discrepancy">
        <sequence resource="EMBL-CDS" id="CAD28467"/>
    </conflict>
    <text>Contaminating sequence. Potential poly-A sequence.</text>
</comment>
<keyword id="KW-0002">3D-structure</keyword>
<keyword id="KW-0010">Activator</keyword>
<keyword id="KW-0877">Alternative promoter usage</keyword>
<keyword id="KW-0025">Alternative splicing</keyword>
<keyword id="KW-0156">Chromatin regulator</keyword>
<keyword id="KW-0160">Chromosomal rearrangement</keyword>
<keyword id="KW-0158">Chromosome</keyword>
<keyword id="KW-0217">Developmental protein</keyword>
<keyword id="KW-0223">Dioxygenase</keyword>
<keyword id="KW-0238">DNA-binding</keyword>
<keyword id="KW-0325">Glycoprotein</keyword>
<keyword id="KW-0408">Iron</keyword>
<keyword id="KW-1017">Isopeptide bond</keyword>
<keyword id="KW-0479">Metal-binding</keyword>
<keyword id="KW-0539">Nucleus</keyword>
<keyword id="KW-0560">Oxidoreductase</keyword>
<keyword id="KW-0597">Phosphoprotein</keyword>
<keyword id="KW-1267">Proteomics identification</keyword>
<keyword id="KW-1185">Reference proteome</keyword>
<keyword id="KW-0678">Repressor</keyword>
<keyword id="KW-0804">Transcription</keyword>
<keyword id="KW-0805">Transcription regulation</keyword>
<keyword id="KW-0832">Ubl conjugation</keyword>
<keyword id="KW-0862">Zinc</keyword>
<keyword id="KW-0863">Zinc-finger</keyword>
<name>TET1_HUMAN</name>